<protein>
    <recommendedName>
        <fullName evidence="3">Alpha-1,2-colitosyltransferase</fullName>
        <shortName evidence="3">ColT</shortName>
        <shortName evidence="3">Colitosyltransferase</shortName>
        <shortName evidence="3">alpha1,2-ColT</shortName>
        <ecNumber evidence="1">2.4.1.341</ecNumber>
    </recommendedName>
    <alternativeName>
        <fullName evidence="4">O-antigen biosynthesis glycosyltransferase WbgN</fullName>
    </alternativeName>
</protein>
<organism>
    <name type="scientific">Escherichia coli</name>
    <dbReference type="NCBI Taxonomy" id="562"/>
    <lineage>
        <taxon>Bacteria</taxon>
        <taxon>Pseudomonadati</taxon>
        <taxon>Pseudomonadota</taxon>
        <taxon>Gammaproteobacteria</taxon>
        <taxon>Enterobacterales</taxon>
        <taxon>Enterobacteriaceae</taxon>
        <taxon>Escherichia</taxon>
    </lineage>
</organism>
<accession>Q8VQ46</accession>
<name>WBGN_ECOLX</name>
<comment type="function">
    <text evidence="1">Involved in the biosynthesis of the lipopolysaccharide (LPS) O-antigen region (PubMed:26703456). Catalyzes the transfer of colitose from GDP-colitose to the galactose residue of beta-Gal-(1-&gt;3)-GlcNAc (lacto-N-biose) via an alpha1,2-linkage (PubMed:26703456). Is specific for beta-Gal-(1-&gt;3)-GlcNAc, but can use GDP-L-fucose as the sugar donor with almost the same efficiency as GDP-L-colitose (PubMed:26703456).</text>
</comment>
<comment type="catalytic activity">
    <reaction evidence="1">
        <text>GDP-beta-L-colitose + beta-D-galactosyl-(1-&gt;3)-N-acetyl-D-glucosamine = alpha-L-colitosyl-(1-&gt;2)-beta-D-galactosyl-(1-&gt;3)-N-acetyl-D-glucosamine + GDP + H(+)</text>
        <dbReference type="Rhea" id="RHEA:49412"/>
        <dbReference type="ChEBI" id="CHEBI:15378"/>
        <dbReference type="ChEBI" id="CHEBI:27707"/>
        <dbReference type="ChEBI" id="CHEBI:58189"/>
        <dbReference type="ChEBI" id="CHEBI:73932"/>
        <dbReference type="ChEBI" id="CHEBI:111509"/>
        <dbReference type="EC" id="2.4.1.341"/>
    </reaction>
    <physiologicalReaction direction="left-to-right" evidence="1">
        <dbReference type="Rhea" id="RHEA:49413"/>
    </physiologicalReaction>
</comment>
<comment type="cofactor">
    <text evidence="1">Does not require a metal cofactor.</text>
</comment>
<comment type="activity regulation">
    <text evidence="1">Addition of metal ions dramatically decreases the activity to 0-40%.</text>
</comment>
<comment type="biophysicochemical properties">
    <kinetics>
        <KM evidence="1">0.76 mM for GDP-colitose</KM>
        <KM evidence="1">1.3 mM for GDP-L-fucose</KM>
        <KM evidence="1">1.4 mM for beta-Gal-(1-&gt;3)-GlcNAc</KM>
        <text evidence="1">kcat is 8.8 min(-1) with GDP-colitose as substrate. kcat is 12 min(-1) with GDP-L-fucose as substrate. kcat is 5.2 min(-1) with beta-Gal-(1-&gt;3)-GlcNAc as substrate.</text>
    </kinetics>
    <phDependence>
        <text evidence="1">Optimum pH is 7.5-9.0 (PubMed:26703456). Exhibits 60% activity at a higher basic condition (pH 10.2) (PubMed:26703456).</text>
    </phDependence>
</comment>
<comment type="pathway">
    <text evidence="1">Bacterial outer membrane biogenesis; LPS O-antigen biosynthesis.</text>
</comment>
<comment type="similarity">
    <text evidence="4">Belongs to the glycosyltransferase 11 family.</text>
</comment>
<dbReference type="EC" id="2.4.1.341" evidence="1"/>
<dbReference type="EMBL" id="AF461121">
    <property type="protein sequence ID" value="AAL67556.1"/>
    <property type="molecule type" value="Genomic_DNA"/>
</dbReference>
<dbReference type="EMBL" id="BGIE01000050">
    <property type="protein sequence ID" value="GDV32863.1"/>
    <property type="molecule type" value="Genomic_DNA"/>
</dbReference>
<dbReference type="EMBL" id="UFZD01000005">
    <property type="protein sequence ID" value="STE11242.1"/>
    <property type="molecule type" value="Genomic_DNA"/>
</dbReference>
<dbReference type="RefSeq" id="WP_000029583.1">
    <property type="nucleotide sequence ID" value="NZ_WJRH01000003.1"/>
</dbReference>
<dbReference type="SMR" id="Q8VQ46"/>
<dbReference type="CAZy" id="GT11">
    <property type="family name" value="Glycosyltransferase Family 11"/>
</dbReference>
<dbReference type="UniPathway" id="UPA00281"/>
<dbReference type="GO" id="GO:0016020">
    <property type="term" value="C:membrane"/>
    <property type="evidence" value="ECO:0007669"/>
    <property type="project" value="InterPro"/>
</dbReference>
<dbReference type="GO" id="GO:0008107">
    <property type="term" value="F:galactoside 2-alpha-L-fucosyltransferase activity"/>
    <property type="evidence" value="ECO:0007669"/>
    <property type="project" value="InterPro"/>
</dbReference>
<dbReference type="GO" id="GO:0036065">
    <property type="term" value="P:fucosylation"/>
    <property type="evidence" value="ECO:0007669"/>
    <property type="project" value="TreeGrafter"/>
</dbReference>
<dbReference type="GO" id="GO:0009243">
    <property type="term" value="P:O antigen biosynthetic process"/>
    <property type="evidence" value="ECO:0007669"/>
    <property type="project" value="UniProtKB-UniPathway"/>
</dbReference>
<dbReference type="GO" id="GO:0006486">
    <property type="term" value="P:protein glycosylation"/>
    <property type="evidence" value="ECO:0007669"/>
    <property type="project" value="TreeGrafter"/>
</dbReference>
<dbReference type="CDD" id="cd11301">
    <property type="entry name" value="Fut1_Fut2_like"/>
    <property type="match status" value="1"/>
</dbReference>
<dbReference type="Gene3D" id="3.40.50.11350">
    <property type="match status" value="1"/>
</dbReference>
<dbReference type="InterPro" id="IPR002516">
    <property type="entry name" value="Glyco_trans_11"/>
</dbReference>
<dbReference type="PANTHER" id="PTHR11927">
    <property type="entry name" value="GALACTOSIDE 2-L-FUCOSYLTRANSFERASE"/>
    <property type="match status" value="1"/>
</dbReference>
<dbReference type="PANTHER" id="PTHR11927:SF9">
    <property type="entry name" value="L-FUCOSYLTRANSFERASE"/>
    <property type="match status" value="1"/>
</dbReference>
<dbReference type="Pfam" id="PF01531">
    <property type="entry name" value="Glyco_transf_11"/>
    <property type="match status" value="1"/>
</dbReference>
<keyword id="KW-0328">Glycosyltransferase</keyword>
<keyword id="KW-0448">Lipopolysaccharide biosynthesis</keyword>
<keyword id="KW-0808">Transferase</keyword>
<reference key="1">
    <citation type="journal article" date="2002" name="J. Bacteriol.">
        <title>The O-antigen gene cluster of Escherichia coli O55:H7 and identification of a new UDP-GlcNAc C4 epimerase gene.</title>
        <authorList>
            <person name="Wang L."/>
            <person name="Huskic S."/>
            <person name="Cisterne A."/>
            <person name="Rothemund D."/>
            <person name="Reeves P.R."/>
        </authorList>
    </citation>
    <scope>NUCLEOTIDE SEQUENCE [GENOMIC DNA]</scope>
    <source>
        <strain>O55:H7</strain>
    </source>
</reference>
<reference key="2">
    <citation type="submission" date="2018-04" db="EMBL/GenBank/DDBJ databases">
        <title>Large scale genomics of bovine and human commensal E. coli to reveal the emerging process of EHEC.</title>
        <authorList>
            <person name="Arimizu Y."/>
            <person name="Ogura Y."/>
        </authorList>
    </citation>
    <scope>NUCLEOTIDE SEQUENCE [LARGE SCALE GENOMIC DNA]</scope>
    <source>
        <strain>SI-P010</strain>
    </source>
</reference>
<reference key="3">
    <citation type="submission" date="2018-06" db="EMBL/GenBank/DDBJ databases">
        <authorList>
            <consortium name="Pathogen Informatics"/>
            <person name="Doyle S."/>
        </authorList>
    </citation>
    <scope>NUCLEOTIDE SEQUENCE [LARGE SCALE GENOMIC DNA]</scope>
    <source>
        <strain>NCTC8959</strain>
    </source>
</reference>
<reference key="4">
    <citation type="journal article" date="2016" name="Glycobiology">
        <title>Biochemical characterization of an alpha1,2-colitosyltransferase from Escherichia coli O55:H7.</title>
        <authorList>
            <person name="Wu Z."/>
            <person name="Zhao G."/>
            <person name="Li T."/>
            <person name="Qu J."/>
            <person name="Guan W."/>
            <person name="Wang J."/>
            <person name="Ma C."/>
            <person name="Li X."/>
            <person name="Zhao W."/>
            <person name="Wang P.G."/>
            <person name="Li L."/>
        </authorList>
    </citation>
    <scope>FUNCTION</scope>
    <scope>CATALYTIC ACTIVITY</scope>
    <scope>COFACTOR</scope>
    <scope>ACTIVITY REGULATION</scope>
    <scope>BIOPHYSICOCHEMICAL PROPERTIES</scope>
    <scope>PATHWAY</scope>
    <source>
        <strain>O55:H7</strain>
    </source>
</reference>
<sequence length="290" mass="34167">MSIVVARLAGGLGNQMFQYAKGYAESVERNSSLKLDLRGYKNYTLHGGFRLDKLNIDNTFVMSKKEMCIFPNFIVRAINKFPKLSLCSKRFESEQYSKKINGSMKGSVEFIGFWQNERYFLEHKEKLREIFTPININLDAKELSDVIRCTNSVSVHIRRGDYVSNVEALKIHGLCTERYYIDSIRYLKERFNNLVFFVFSDDIEWCKKYKNEIFSRSDDVKFIEGNTQEVDMWLMSNAKYHIIANSSFSWWGAWLKNYDLGITIAPTPWFEREELNSFDPCPEKWVRIEK</sequence>
<feature type="chain" id="PRO_0000459428" description="Alpha-1,2-colitosyltransferase">
    <location>
        <begin position="1"/>
        <end position="290"/>
    </location>
</feature>
<evidence type="ECO:0000269" key="1">
    <source>
    </source>
</evidence>
<evidence type="ECO:0000303" key="2">
    <source>
    </source>
</evidence>
<evidence type="ECO:0000303" key="3">
    <source>
    </source>
</evidence>
<evidence type="ECO:0000305" key="4"/>
<evidence type="ECO:0000312" key="5">
    <source>
        <dbReference type="EMBL" id="GDV32863.1"/>
    </source>
</evidence>
<evidence type="ECO:0000312" key="6">
    <source>
        <dbReference type="EMBL" id="STE11242.1"/>
    </source>
</evidence>
<gene>
    <name evidence="2" type="primary">wbgN</name>
    <name evidence="5" type="ORF">BvCmsSIP010_03491</name>
    <name evidence="6" type="ORF">NCTC8959_01925</name>
</gene>
<proteinExistence type="evidence at protein level"/>